<reference key="1">
    <citation type="submission" date="2007-11" db="EMBL/GenBank/DDBJ databases">
        <authorList>
            <consortium name="The Salmonella enterica serovar Paratyphi B Genome Sequencing Project"/>
            <person name="McClelland M."/>
            <person name="Sanderson E.K."/>
            <person name="Porwollik S."/>
            <person name="Spieth J."/>
            <person name="Clifton W.S."/>
            <person name="Fulton R."/>
            <person name="Cordes M."/>
            <person name="Wollam A."/>
            <person name="Shah N."/>
            <person name="Pepin K."/>
            <person name="Bhonagiri V."/>
            <person name="Nash W."/>
            <person name="Johnson M."/>
            <person name="Thiruvilangam P."/>
            <person name="Wilson R."/>
        </authorList>
    </citation>
    <scope>NUCLEOTIDE SEQUENCE [LARGE SCALE GENOMIC DNA]</scope>
    <source>
        <strain>ATCC BAA-1250 / SPB7</strain>
    </source>
</reference>
<gene>
    <name evidence="1" type="primary">torD</name>
    <name type="ordered locus">SPAB_04757</name>
</gene>
<organism>
    <name type="scientific">Salmonella paratyphi B (strain ATCC BAA-1250 / SPB7)</name>
    <dbReference type="NCBI Taxonomy" id="1016998"/>
    <lineage>
        <taxon>Bacteria</taxon>
        <taxon>Pseudomonadati</taxon>
        <taxon>Pseudomonadota</taxon>
        <taxon>Gammaproteobacteria</taxon>
        <taxon>Enterobacterales</taxon>
        <taxon>Enterobacteriaceae</taxon>
        <taxon>Salmonella</taxon>
    </lineage>
</organism>
<accession>A9MWL1</accession>
<sequence length="210" mass="23798">MIKQPALVQEQYACVYAWLALLFFREVDDEGLIQLQSAEIADWLALLKRQPALAASVALLEQKIAALSLRQDAQLELAADFCGLFLMTDKKSALPYASQYPQQEPGMIKHLLLEAGMEVNDDFKEPADHLAIYLELLSHLHFSLGESFQQRRMNKLRQKTLSSLLEWLPEFTNNCLKHDPYGFYAALSQLLLAIVRFDDGKEDLSIVAAE</sequence>
<proteinExistence type="inferred from homology"/>
<evidence type="ECO:0000255" key="1">
    <source>
        <dbReference type="HAMAP-Rule" id="MF_01150"/>
    </source>
</evidence>
<keyword id="KW-0143">Chaperone</keyword>
<keyword id="KW-0963">Cytoplasm</keyword>
<comment type="function">
    <text evidence="1">Involved in the biogenesis of TorA. Acts on TorA before the insertion of the molybdenum cofactor and, as a result, probably favors a conformation of the apoenzyme that is competent for acquiring the cofactor.</text>
</comment>
<comment type="subcellular location">
    <subcellularLocation>
        <location evidence="1">Cytoplasm</location>
    </subcellularLocation>
</comment>
<comment type="similarity">
    <text evidence="1">Belongs to the TorD/DmsD family. TorD subfamily.</text>
</comment>
<name>TORD_SALPB</name>
<protein>
    <recommendedName>
        <fullName evidence="1">Chaperone protein TorD</fullName>
    </recommendedName>
</protein>
<feature type="chain" id="PRO_1000085102" description="Chaperone protein TorD">
    <location>
        <begin position="1"/>
        <end position="210"/>
    </location>
</feature>
<dbReference type="EMBL" id="CP000886">
    <property type="protein sequence ID" value="ABX70068.1"/>
    <property type="molecule type" value="Genomic_DNA"/>
</dbReference>
<dbReference type="RefSeq" id="WP_000595427.1">
    <property type="nucleotide sequence ID" value="NC_010102.1"/>
</dbReference>
<dbReference type="SMR" id="A9MWL1"/>
<dbReference type="KEGG" id="spq:SPAB_04757"/>
<dbReference type="PATRIC" id="fig|1016998.12.peg.4475"/>
<dbReference type="HOGENOM" id="CLU_077650_4_0_6"/>
<dbReference type="BioCyc" id="SENT1016998:SPAB_RS19305-MONOMER"/>
<dbReference type="Proteomes" id="UP000008556">
    <property type="component" value="Chromosome"/>
</dbReference>
<dbReference type="GO" id="GO:0005737">
    <property type="term" value="C:cytoplasm"/>
    <property type="evidence" value="ECO:0007669"/>
    <property type="project" value="UniProtKB-SubCell"/>
</dbReference>
<dbReference type="GO" id="GO:0051259">
    <property type="term" value="P:protein complex oligomerization"/>
    <property type="evidence" value="ECO:0007669"/>
    <property type="project" value="InterPro"/>
</dbReference>
<dbReference type="GO" id="GO:0006457">
    <property type="term" value="P:protein folding"/>
    <property type="evidence" value="ECO:0007669"/>
    <property type="project" value="UniProtKB-UniRule"/>
</dbReference>
<dbReference type="Gene3D" id="1.20.120.1820">
    <property type="match status" value="1"/>
</dbReference>
<dbReference type="Gene3D" id="1.20.1280.20">
    <property type="entry name" value="HscB, C-terminal domain"/>
    <property type="match status" value="1"/>
</dbReference>
<dbReference type="HAMAP" id="MF_01150">
    <property type="entry name" value="TorD"/>
    <property type="match status" value="1"/>
</dbReference>
<dbReference type="InterPro" id="IPR023069">
    <property type="entry name" value="Chaperone_TorD"/>
</dbReference>
<dbReference type="InterPro" id="IPR020945">
    <property type="entry name" value="DMSO/NO3_reduct_chaperone"/>
</dbReference>
<dbReference type="InterPro" id="IPR036386">
    <property type="entry name" value="HscB_C_sf"/>
</dbReference>
<dbReference type="InterPro" id="IPR036411">
    <property type="entry name" value="TorD-like_sf"/>
</dbReference>
<dbReference type="InterPro" id="IPR050289">
    <property type="entry name" value="TorD/DmsD_chaperones"/>
</dbReference>
<dbReference type="NCBIfam" id="NF003442">
    <property type="entry name" value="PRK04976.1"/>
    <property type="match status" value="1"/>
</dbReference>
<dbReference type="PANTHER" id="PTHR34227:SF11">
    <property type="entry name" value="CHAPERONE PROTEIN TORD"/>
    <property type="match status" value="1"/>
</dbReference>
<dbReference type="PANTHER" id="PTHR34227">
    <property type="entry name" value="CHAPERONE PROTEIN YCDY"/>
    <property type="match status" value="1"/>
</dbReference>
<dbReference type="Pfam" id="PF02613">
    <property type="entry name" value="Nitrate_red_del"/>
    <property type="match status" value="1"/>
</dbReference>
<dbReference type="SUPFAM" id="SSF89155">
    <property type="entry name" value="TorD-like"/>
    <property type="match status" value="1"/>
</dbReference>